<dbReference type="EC" id="2.-.-.-"/>
<dbReference type="EMBL" id="L42023">
    <property type="protein sequence ID" value="AAC23312.1"/>
    <property type="molecule type" value="Genomic_DNA"/>
</dbReference>
<dbReference type="PIR" id="G64039">
    <property type="entry name" value="G64039"/>
</dbReference>
<dbReference type="RefSeq" id="NP_439809.1">
    <property type="nucleotide sequence ID" value="NC_000907.1"/>
</dbReference>
<dbReference type="SMR" id="P44285"/>
<dbReference type="STRING" id="71421.HI_1667"/>
<dbReference type="EnsemblBacteria" id="AAC23312">
    <property type="protein sequence ID" value="AAC23312"/>
    <property type="gene ID" value="HI_1667"/>
</dbReference>
<dbReference type="KEGG" id="hin:HI_1667"/>
<dbReference type="PATRIC" id="fig|71421.8.peg.1745"/>
<dbReference type="eggNOG" id="COG2989">
    <property type="taxonomic scope" value="Bacteria"/>
</dbReference>
<dbReference type="HOGENOM" id="CLU_020360_3_0_6"/>
<dbReference type="OrthoDB" id="9778545at2"/>
<dbReference type="PhylomeDB" id="P44285"/>
<dbReference type="BioCyc" id="HINF71421:G1GJ1-1683-MONOMER"/>
<dbReference type="UniPathway" id="UPA00219"/>
<dbReference type="Proteomes" id="UP000000579">
    <property type="component" value="Chromosome"/>
</dbReference>
<dbReference type="GO" id="GO:0016020">
    <property type="term" value="C:membrane"/>
    <property type="evidence" value="ECO:0007669"/>
    <property type="project" value="UniProtKB-SubCell"/>
</dbReference>
<dbReference type="GO" id="GO:0004180">
    <property type="term" value="F:carboxypeptidase activity"/>
    <property type="evidence" value="ECO:0007669"/>
    <property type="project" value="UniProtKB-ARBA"/>
</dbReference>
<dbReference type="GO" id="GO:0016757">
    <property type="term" value="F:glycosyltransferase activity"/>
    <property type="evidence" value="ECO:0007669"/>
    <property type="project" value="UniProtKB-KW"/>
</dbReference>
<dbReference type="GO" id="GO:0071555">
    <property type="term" value="P:cell wall organization"/>
    <property type="evidence" value="ECO:0007669"/>
    <property type="project" value="UniProtKB-KW"/>
</dbReference>
<dbReference type="GO" id="GO:0009252">
    <property type="term" value="P:peptidoglycan biosynthetic process"/>
    <property type="evidence" value="ECO:0007669"/>
    <property type="project" value="UniProtKB-UniPathway"/>
</dbReference>
<dbReference type="GO" id="GO:0008360">
    <property type="term" value="P:regulation of cell shape"/>
    <property type="evidence" value="ECO:0007669"/>
    <property type="project" value="UniProtKB-KW"/>
</dbReference>
<dbReference type="CDD" id="cd16913">
    <property type="entry name" value="YkuD_like"/>
    <property type="match status" value="1"/>
</dbReference>
<dbReference type="Gene3D" id="2.40.440.10">
    <property type="entry name" value="L,D-transpeptidase catalytic domain-like"/>
    <property type="match status" value="1"/>
</dbReference>
<dbReference type="InterPro" id="IPR052905">
    <property type="entry name" value="LD-transpeptidase_YkuD-like"/>
</dbReference>
<dbReference type="InterPro" id="IPR005490">
    <property type="entry name" value="LD_TPept_cat_dom"/>
</dbReference>
<dbReference type="InterPro" id="IPR045380">
    <property type="entry name" value="LD_TPept_scaffold_dom"/>
</dbReference>
<dbReference type="InterPro" id="IPR038063">
    <property type="entry name" value="Transpep_catalytic_dom"/>
</dbReference>
<dbReference type="PANTHER" id="PTHR41533">
    <property type="entry name" value="L,D-TRANSPEPTIDASE HI_1667-RELATED"/>
    <property type="match status" value="1"/>
</dbReference>
<dbReference type="PANTHER" id="PTHR41533:SF1">
    <property type="entry name" value="L,D-TRANSPEPTIDASE YCBB-RELATED"/>
    <property type="match status" value="1"/>
</dbReference>
<dbReference type="Pfam" id="PF20142">
    <property type="entry name" value="Scaffold"/>
    <property type="match status" value="1"/>
</dbReference>
<dbReference type="Pfam" id="PF03734">
    <property type="entry name" value="YkuD"/>
    <property type="match status" value="1"/>
</dbReference>
<dbReference type="SUPFAM" id="SSF141523">
    <property type="entry name" value="L,D-transpeptidase catalytic domain-like"/>
    <property type="match status" value="1"/>
</dbReference>
<dbReference type="PROSITE" id="PS52029">
    <property type="entry name" value="LD_TPASE"/>
    <property type="match status" value="1"/>
</dbReference>
<dbReference type="PROSITE" id="PS51257">
    <property type="entry name" value="PROKAR_LIPOPROTEIN"/>
    <property type="match status" value="1"/>
</dbReference>
<comment type="pathway">
    <text>Cell wall biogenesis; peptidoglycan biosynthesis.</text>
</comment>
<comment type="subcellular location">
    <subcellularLocation>
        <location evidence="3">Membrane</location>
        <topology evidence="3">Single-pass membrane protein</topology>
    </subcellularLocation>
</comment>
<comment type="similarity">
    <text evidence="3">Belongs to the YkuD family.</text>
</comment>
<feature type="chain" id="PRO_0000168767" description="Putative L,D-transpeptidase HI_1667">
    <location>
        <begin position="1"/>
        <end position="489"/>
    </location>
</feature>
<feature type="transmembrane region" description="Helical" evidence="1">
    <location>
        <begin position="10"/>
        <end position="29"/>
    </location>
</feature>
<feature type="domain" description="L,D-TPase catalytic" evidence="2">
    <location>
        <begin position="254"/>
        <end position="433"/>
    </location>
</feature>
<feature type="active site" description="Proton donor/acceptor" evidence="2">
    <location>
        <position position="384"/>
    </location>
</feature>
<feature type="active site" description="Nucleophile" evidence="2">
    <location>
        <position position="403"/>
    </location>
</feature>
<reference key="1">
    <citation type="journal article" date="1995" name="Science">
        <title>Whole-genome random sequencing and assembly of Haemophilus influenzae Rd.</title>
        <authorList>
            <person name="Fleischmann R.D."/>
            <person name="Adams M.D."/>
            <person name="White O."/>
            <person name="Clayton R.A."/>
            <person name="Kirkness E.F."/>
            <person name="Kerlavage A.R."/>
            <person name="Bult C.J."/>
            <person name="Tomb J.-F."/>
            <person name="Dougherty B.A."/>
            <person name="Merrick J.M."/>
            <person name="McKenney K."/>
            <person name="Sutton G.G."/>
            <person name="FitzHugh W."/>
            <person name="Fields C.A."/>
            <person name="Gocayne J.D."/>
            <person name="Scott J.D."/>
            <person name="Shirley R."/>
            <person name="Liu L.-I."/>
            <person name="Glodek A."/>
            <person name="Kelley J.M."/>
            <person name="Weidman J.F."/>
            <person name="Phillips C.A."/>
            <person name="Spriggs T."/>
            <person name="Hedblom E."/>
            <person name="Cotton M.D."/>
            <person name="Utterback T.R."/>
            <person name="Hanna M.C."/>
            <person name="Nguyen D.T."/>
            <person name="Saudek D.M."/>
            <person name="Brandon R.C."/>
            <person name="Fine L.D."/>
            <person name="Fritchman J.L."/>
            <person name="Fuhrmann J.L."/>
            <person name="Geoghagen N.S.M."/>
            <person name="Gnehm C.L."/>
            <person name="McDonald L.A."/>
            <person name="Small K.V."/>
            <person name="Fraser C.M."/>
            <person name="Smith H.O."/>
            <person name="Venter J.C."/>
        </authorList>
    </citation>
    <scope>NUCLEOTIDE SEQUENCE [LARGE SCALE GENOMIC DNA]</scope>
    <source>
        <strain>ATCC 51907 / DSM 11121 / KW20 / Rd</strain>
    </source>
</reference>
<sequence length="489" mass="55582">MVVFKSTLKLSLFALSLSMMMSGCVLVGLSKNDQSKSLYGINLSHLSLAERKELEEAIYADQQRLTEEKQTLLNMTLTHEIGDHKLQFKPLLARLYASRKYAPLWTDNAAARQLLRDYAAMVASGISKSSATSLETLALVEQQGGLVYDVLLSDILLDYLYYTQNVRSQASNWLYSSAQYQAQQPENDHIQRWLSAVENNQLLDFIQSLAGENHLYRQTIQSLPMFIPTSKESNITQKLAMNAQRLRVIPDFHNGIFVNIPSYKLQYYRDGDLILESRVIVGTNSRRTPVMYSKLSNVVVNPPWNAPIRLINEDLLPKMKADPNYITEHNYSILDNQGNVVDPASIDWESIDNKFPYRVRQAAGDSALGNYKFNMPSSDAIYLHDTPNRGLFNRKNRALSSGCVRVEKSDQLASILLKEAGWTETRKNTVLASKKTTSAPIRSDNPVFLYYVTAWIENGNIVNLPDIYGYDRQINLAEINWDLVKKYLQ</sequence>
<name>Y1667_HAEIN</name>
<gene>
    <name type="ordered locus">HI_1667</name>
</gene>
<protein>
    <recommendedName>
        <fullName>Putative L,D-transpeptidase HI_1667</fullName>
        <ecNumber>2.-.-.-</ecNumber>
    </recommendedName>
</protein>
<accession>P44285</accession>
<evidence type="ECO:0000255" key="1"/>
<evidence type="ECO:0000255" key="2">
    <source>
        <dbReference type="PROSITE-ProRule" id="PRU01373"/>
    </source>
</evidence>
<evidence type="ECO:0000305" key="3"/>
<organism>
    <name type="scientific">Haemophilus influenzae (strain ATCC 51907 / DSM 11121 / KW20 / Rd)</name>
    <dbReference type="NCBI Taxonomy" id="71421"/>
    <lineage>
        <taxon>Bacteria</taxon>
        <taxon>Pseudomonadati</taxon>
        <taxon>Pseudomonadota</taxon>
        <taxon>Gammaproteobacteria</taxon>
        <taxon>Pasteurellales</taxon>
        <taxon>Pasteurellaceae</taxon>
        <taxon>Haemophilus</taxon>
    </lineage>
</organism>
<keyword id="KW-0133">Cell shape</keyword>
<keyword id="KW-0961">Cell wall biogenesis/degradation</keyword>
<keyword id="KW-0328">Glycosyltransferase</keyword>
<keyword id="KW-0378">Hydrolase</keyword>
<keyword id="KW-0472">Membrane</keyword>
<keyword id="KW-0573">Peptidoglycan synthesis</keyword>
<keyword id="KW-1185">Reference proteome</keyword>
<keyword id="KW-0808">Transferase</keyword>
<keyword id="KW-0812">Transmembrane</keyword>
<keyword id="KW-1133">Transmembrane helix</keyword>
<proteinExistence type="inferred from homology"/>